<dbReference type="EC" id="1.1.1.94" evidence="1"/>
<dbReference type="EMBL" id="AM040264">
    <property type="protein sequence ID" value="CAJ11845.1"/>
    <property type="molecule type" value="Genomic_DNA"/>
</dbReference>
<dbReference type="RefSeq" id="WP_002964959.1">
    <property type="nucleotide sequence ID" value="NZ_KN046823.1"/>
</dbReference>
<dbReference type="SMR" id="Q2YLR3"/>
<dbReference type="STRING" id="359391.BAB1_1889"/>
<dbReference type="KEGG" id="bmf:BAB1_1889"/>
<dbReference type="PATRIC" id="fig|359391.11.peg.1128"/>
<dbReference type="HOGENOM" id="CLU_033449_0_2_5"/>
<dbReference type="PhylomeDB" id="Q2YLR3"/>
<dbReference type="UniPathway" id="UPA00940"/>
<dbReference type="Proteomes" id="UP000002719">
    <property type="component" value="Chromosome I"/>
</dbReference>
<dbReference type="GO" id="GO:0005829">
    <property type="term" value="C:cytosol"/>
    <property type="evidence" value="ECO:0007669"/>
    <property type="project" value="TreeGrafter"/>
</dbReference>
<dbReference type="GO" id="GO:0047952">
    <property type="term" value="F:glycerol-3-phosphate dehydrogenase [NAD(P)+] activity"/>
    <property type="evidence" value="ECO:0007669"/>
    <property type="project" value="UniProtKB-UniRule"/>
</dbReference>
<dbReference type="GO" id="GO:0051287">
    <property type="term" value="F:NAD binding"/>
    <property type="evidence" value="ECO:0007669"/>
    <property type="project" value="InterPro"/>
</dbReference>
<dbReference type="GO" id="GO:0005975">
    <property type="term" value="P:carbohydrate metabolic process"/>
    <property type="evidence" value="ECO:0007669"/>
    <property type="project" value="InterPro"/>
</dbReference>
<dbReference type="GO" id="GO:0046167">
    <property type="term" value="P:glycerol-3-phosphate biosynthetic process"/>
    <property type="evidence" value="ECO:0007669"/>
    <property type="project" value="UniProtKB-UniRule"/>
</dbReference>
<dbReference type="GO" id="GO:0046168">
    <property type="term" value="P:glycerol-3-phosphate catabolic process"/>
    <property type="evidence" value="ECO:0007669"/>
    <property type="project" value="InterPro"/>
</dbReference>
<dbReference type="GO" id="GO:0006650">
    <property type="term" value="P:glycerophospholipid metabolic process"/>
    <property type="evidence" value="ECO:0007669"/>
    <property type="project" value="UniProtKB-UniRule"/>
</dbReference>
<dbReference type="GO" id="GO:0008654">
    <property type="term" value="P:phospholipid biosynthetic process"/>
    <property type="evidence" value="ECO:0007669"/>
    <property type="project" value="UniProtKB-KW"/>
</dbReference>
<dbReference type="FunFam" id="3.40.50.720:FF:000019">
    <property type="entry name" value="Glycerol-3-phosphate dehydrogenase [NAD(P)+]"/>
    <property type="match status" value="1"/>
</dbReference>
<dbReference type="Gene3D" id="1.10.1040.10">
    <property type="entry name" value="N-(1-d-carboxylethyl)-l-norvaline Dehydrogenase, domain 2"/>
    <property type="match status" value="1"/>
</dbReference>
<dbReference type="Gene3D" id="3.40.50.720">
    <property type="entry name" value="NAD(P)-binding Rossmann-like Domain"/>
    <property type="match status" value="1"/>
</dbReference>
<dbReference type="HAMAP" id="MF_00394">
    <property type="entry name" value="NAD_Glyc3P_dehydrog"/>
    <property type="match status" value="1"/>
</dbReference>
<dbReference type="InterPro" id="IPR008927">
    <property type="entry name" value="6-PGluconate_DH-like_C_sf"/>
</dbReference>
<dbReference type="InterPro" id="IPR013328">
    <property type="entry name" value="6PGD_dom2"/>
</dbReference>
<dbReference type="InterPro" id="IPR006168">
    <property type="entry name" value="G3P_DH_NAD-dep"/>
</dbReference>
<dbReference type="InterPro" id="IPR006109">
    <property type="entry name" value="G3P_DH_NAD-dep_C"/>
</dbReference>
<dbReference type="InterPro" id="IPR011128">
    <property type="entry name" value="G3P_DH_NAD-dep_N"/>
</dbReference>
<dbReference type="InterPro" id="IPR036291">
    <property type="entry name" value="NAD(P)-bd_dom_sf"/>
</dbReference>
<dbReference type="NCBIfam" id="NF000940">
    <property type="entry name" value="PRK00094.1-2"/>
    <property type="match status" value="1"/>
</dbReference>
<dbReference type="NCBIfam" id="NF000942">
    <property type="entry name" value="PRK00094.1-4"/>
    <property type="match status" value="1"/>
</dbReference>
<dbReference type="PANTHER" id="PTHR11728">
    <property type="entry name" value="GLYCEROL-3-PHOSPHATE DEHYDROGENASE"/>
    <property type="match status" value="1"/>
</dbReference>
<dbReference type="PANTHER" id="PTHR11728:SF1">
    <property type="entry name" value="GLYCEROL-3-PHOSPHATE DEHYDROGENASE [NAD(+)] 2, CHLOROPLASTIC"/>
    <property type="match status" value="1"/>
</dbReference>
<dbReference type="Pfam" id="PF07479">
    <property type="entry name" value="NAD_Gly3P_dh_C"/>
    <property type="match status" value="1"/>
</dbReference>
<dbReference type="Pfam" id="PF01210">
    <property type="entry name" value="NAD_Gly3P_dh_N"/>
    <property type="match status" value="1"/>
</dbReference>
<dbReference type="PIRSF" id="PIRSF000114">
    <property type="entry name" value="Glycerol-3-P_dh"/>
    <property type="match status" value="1"/>
</dbReference>
<dbReference type="PRINTS" id="PR00077">
    <property type="entry name" value="GPDHDRGNASE"/>
</dbReference>
<dbReference type="SUPFAM" id="SSF48179">
    <property type="entry name" value="6-phosphogluconate dehydrogenase C-terminal domain-like"/>
    <property type="match status" value="1"/>
</dbReference>
<dbReference type="SUPFAM" id="SSF51735">
    <property type="entry name" value="NAD(P)-binding Rossmann-fold domains"/>
    <property type="match status" value="1"/>
</dbReference>
<dbReference type="PROSITE" id="PS00957">
    <property type="entry name" value="NAD_G3PDH"/>
    <property type="match status" value="1"/>
</dbReference>
<feature type="chain" id="PRO_0000255287" description="Glycerol-3-phosphate dehydrogenase [NAD(P)+]">
    <location>
        <begin position="1"/>
        <end position="326"/>
    </location>
</feature>
<feature type="active site" description="Proton acceptor" evidence="1">
    <location>
        <position position="190"/>
    </location>
</feature>
<feature type="binding site" evidence="1">
    <location>
        <position position="13"/>
    </location>
    <ligand>
        <name>NADPH</name>
        <dbReference type="ChEBI" id="CHEBI:57783"/>
    </ligand>
</feature>
<feature type="binding site" evidence="1">
    <location>
        <position position="33"/>
    </location>
    <ligand>
        <name>NADPH</name>
        <dbReference type="ChEBI" id="CHEBI:57783"/>
    </ligand>
</feature>
<feature type="binding site" evidence="1">
    <location>
        <position position="107"/>
    </location>
    <ligand>
        <name>NADPH</name>
        <dbReference type="ChEBI" id="CHEBI:57783"/>
    </ligand>
</feature>
<feature type="binding site" evidence="1">
    <location>
        <position position="107"/>
    </location>
    <ligand>
        <name>sn-glycerol 3-phosphate</name>
        <dbReference type="ChEBI" id="CHEBI:57597"/>
    </ligand>
</feature>
<feature type="binding site" evidence="1">
    <location>
        <position position="135"/>
    </location>
    <ligand>
        <name>sn-glycerol 3-phosphate</name>
        <dbReference type="ChEBI" id="CHEBI:57597"/>
    </ligand>
</feature>
<feature type="binding site" evidence="1">
    <location>
        <position position="137"/>
    </location>
    <ligand>
        <name>sn-glycerol 3-phosphate</name>
        <dbReference type="ChEBI" id="CHEBI:57597"/>
    </ligand>
</feature>
<feature type="binding site" evidence="1">
    <location>
        <position position="139"/>
    </location>
    <ligand>
        <name>NADPH</name>
        <dbReference type="ChEBI" id="CHEBI:57783"/>
    </ligand>
</feature>
<feature type="binding site" evidence="1">
    <location>
        <position position="190"/>
    </location>
    <ligand>
        <name>sn-glycerol 3-phosphate</name>
        <dbReference type="ChEBI" id="CHEBI:57597"/>
    </ligand>
</feature>
<feature type="binding site" evidence="1">
    <location>
        <position position="243"/>
    </location>
    <ligand>
        <name>sn-glycerol 3-phosphate</name>
        <dbReference type="ChEBI" id="CHEBI:57597"/>
    </ligand>
</feature>
<feature type="binding site" evidence="1">
    <location>
        <position position="253"/>
    </location>
    <ligand>
        <name>sn-glycerol 3-phosphate</name>
        <dbReference type="ChEBI" id="CHEBI:57597"/>
    </ligand>
</feature>
<feature type="binding site" evidence="1">
    <location>
        <position position="254"/>
    </location>
    <ligand>
        <name>NADPH</name>
        <dbReference type="ChEBI" id="CHEBI:57783"/>
    </ligand>
</feature>
<feature type="binding site" evidence="1">
    <location>
        <position position="254"/>
    </location>
    <ligand>
        <name>sn-glycerol 3-phosphate</name>
        <dbReference type="ChEBI" id="CHEBI:57597"/>
    </ligand>
</feature>
<feature type="binding site" evidence="1">
    <location>
        <position position="255"/>
    </location>
    <ligand>
        <name>sn-glycerol 3-phosphate</name>
        <dbReference type="ChEBI" id="CHEBI:57597"/>
    </ligand>
</feature>
<feature type="binding site" evidence="1">
    <location>
        <position position="273"/>
    </location>
    <ligand>
        <name>NADPH</name>
        <dbReference type="ChEBI" id="CHEBI:57783"/>
    </ligand>
</feature>
<feature type="binding site" evidence="1">
    <location>
        <position position="275"/>
    </location>
    <ligand>
        <name>NADPH</name>
        <dbReference type="ChEBI" id="CHEBI:57783"/>
    </ligand>
</feature>
<gene>
    <name evidence="1" type="primary">gpsA</name>
    <name type="ordered locus">BAB1_1889</name>
</gene>
<keyword id="KW-0963">Cytoplasm</keyword>
<keyword id="KW-0444">Lipid biosynthesis</keyword>
<keyword id="KW-0443">Lipid metabolism</keyword>
<keyword id="KW-0520">NAD</keyword>
<keyword id="KW-0521">NADP</keyword>
<keyword id="KW-0547">Nucleotide-binding</keyword>
<keyword id="KW-0560">Oxidoreductase</keyword>
<keyword id="KW-0594">Phospholipid biosynthesis</keyword>
<keyword id="KW-1208">Phospholipid metabolism</keyword>
<keyword id="KW-1185">Reference proteome</keyword>
<evidence type="ECO:0000255" key="1">
    <source>
        <dbReference type="HAMAP-Rule" id="MF_00394"/>
    </source>
</evidence>
<organism>
    <name type="scientific">Brucella abortus (strain 2308)</name>
    <dbReference type="NCBI Taxonomy" id="359391"/>
    <lineage>
        <taxon>Bacteria</taxon>
        <taxon>Pseudomonadati</taxon>
        <taxon>Pseudomonadota</taxon>
        <taxon>Alphaproteobacteria</taxon>
        <taxon>Hyphomicrobiales</taxon>
        <taxon>Brucellaceae</taxon>
        <taxon>Brucella/Ochrobactrum group</taxon>
        <taxon>Brucella</taxon>
    </lineage>
</organism>
<proteinExistence type="inferred from homology"/>
<protein>
    <recommendedName>
        <fullName evidence="1">Glycerol-3-phosphate dehydrogenase [NAD(P)+]</fullName>
        <ecNumber evidence="1">1.1.1.94</ecNumber>
    </recommendedName>
    <alternativeName>
        <fullName evidence="1">NAD(P)(+)-dependent glycerol-3-phosphate dehydrogenase</fullName>
    </alternativeName>
    <alternativeName>
        <fullName evidence="1">NAD(P)H-dependent dihydroxyacetone-phosphate reductase</fullName>
    </alternativeName>
</protein>
<reference key="1">
    <citation type="journal article" date="2005" name="Infect. Immun.">
        <title>Whole-genome analyses of speciation events in pathogenic Brucellae.</title>
        <authorList>
            <person name="Chain P.S."/>
            <person name="Comerci D.J."/>
            <person name="Tolmasky M.E."/>
            <person name="Larimer F.W."/>
            <person name="Malfatti S.A."/>
            <person name="Vergez L.M."/>
            <person name="Aguero F."/>
            <person name="Land M.L."/>
            <person name="Ugalde R.A."/>
            <person name="Garcia E."/>
        </authorList>
    </citation>
    <scope>NUCLEOTIDE SEQUENCE [LARGE SCALE GENOMIC DNA]</scope>
    <source>
        <strain>2308</strain>
    </source>
</reference>
<sequence length="326" mass="33377">MSTKIAVLGGGAWGTALAAMAAKGGHESWLYARDAETVVAINKDRRNPRYLGDITLADGIRASTDAAAVVTGADAVLAVIPAQAMRNGLSELGTLIPQASPIVLCAKGIEQNTGRLMSEVVAEILPDHRIAALSGPSFASDVARGLPTAVTVACEDANTADRLAALLSGPAFRCYSTTDLKGVETGGALKNVLAIAAGAAIGRGYGASAQAALVTRGFAELRRIGQAMSARPETIMGLSGLGDLMLTCSSSQSRNYSYGLALGRGEDLTSRPLAEGVATAPIAAELCRKHNISAPIIDAVGALLDGKITIDEAVTALLNRPLKTED</sequence>
<comment type="function">
    <text evidence="1">Catalyzes the reduction of the glycolytic intermediate dihydroxyacetone phosphate (DHAP) to sn-glycerol 3-phosphate (G3P), the key precursor for phospholipid synthesis.</text>
</comment>
<comment type="catalytic activity">
    <reaction evidence="1">
        <text>sn-glycerol 3-phosphate + NAD(+) = dihydroxyacetone phosphate + NADH + H(+)</text>
        <dbReference type="Rhea" id="RHEA:11092"/>
        <dbReference type="ChEBI" id="CHEBI:15378"/>
        <dbReference type="ChEBI" id="CHEBI:57540"/>
        <dbReference type="ChEBI" id="CHEBI:57597"/>
        <dbReference type="ChEBI" id="CHEBI:57642"/>
        <dbReference type="ChEBI" id="CHEBI:57945"/>
        <dbReference type="EC" id="1.1.1.94"/>
    </reaction>
    <physiologicalReaction direction="right-to-left" evidence="1">
        <dbReference type="Rhea" id="RHEA:11094"/>
    </physiologicalReaction>
</comment>
<comment type="catalytic activity">
    <reaction evidence="1">
        <text>sn-glycerol 3-phosphate + NADP(+) = dihydroxyacetone phosphate + NADPH + H(+)</text>
        <dbReference type="Rhea" id="RHEA:11096"/>
        <dbReference type="ChEBI" id="CHEBI:15378"/>
        <dbReference type="ChEBI" id="CHEBI:57597"/>
        <dbReference type="ChEBI" id="CHEBI:57642"/>
        <dbReference type="ChEBI" id="CHEBI:57783"/>
        <dbReference type="ChEBI" id="CHEBI:58349"/>
        <dbReference type="EC" id="1.1.1.94"/>
    </reaction>
    <physiologicalReaction direction="right-to-left" evidence="1">
        <dbReference type="Rhea" id="RHEA:11098"/>
    </physiologicalReaction>
</comment>
<comment type="pathway">
    <text evidence="1">Membrane lipid metabolism; glycerophospholipid metabolism.</text>
</comment>
<comment type="subcellular location">
    <subcellularLocation>
        <location evidence="1">Cytoplasm</location>
    </subcellularLocation>
</comment>
<comment type="similarity">
    <text evidence="1">Belongs to the NAD-dependent glycerol-3-phosphate dehydrogenase family.</text>
</comment>
<name>GPDA_BRUA2</name>
<accession>Q2YLR3</accession>